<sequence length="96" mass="10191">MNILGMKLFAHHKGGGSSANGRNSAGRRLGAKAGDGQTIHAGTIIYRQRGTKIHPGKNVGQGGDDTLFALVNGVVKFERLGKYKKQVSVYPAEEAK</sequence>
<accession>A8YVX6</accession>
<proteinExistence type="inferred from homology"/>
<feature type="chain" id="PRO_1000072544" description="Large ribosomal subunit protein bL27">
    <location>
        <begin position="1"/>
        <end position="96"/>
    </location>
</feature>
<feature type="region of interest" description="Disordered" evidence="2">
    <location>
        <begin position="12"/>
        <end position="33"/>
    </location>
</feature>
<feature type="compositionally biased region" description="Low complexity" evidence="2">
    <location>
        <begin position="19"/>
        <end position="28"/>
    </location>
</feature>
<gene>
    <name evidence="1" type="primary">rpmA</name>
    <name type="ordered locus">lhv_1423</name>
</gene>
<organism>
    <name type="scientific">Lactobacillus helveticus (strain DPC 4571)</name>
    <dbReference type="NCBI Taxonomy" id="405566"/>
    <lineage>
        <taxon>Bacteria</taxon>
        <taxon>Bacillati</taxon>
        <taxon>Bacillota</taxon>
        <taxon>Bacilli</taxon>
        <taxon>Lactobacillales</taxon>
        <taxon>Lactobacillaceae</taxon>
        <taxon>Lactobacillus</taxon>
    </lineage>
</organism>
<name>RL27_LACH4</name>
<keyword id="KW-0687">Ribonucleoprotein</keyword>
<keyword id="KW-0689">Ribosomal protein</keyword>
<evidence type="ECO:0000255" key="1">
    <source>
        <dbReference type="HAMAP-Rule" id="MF_00539"/>
    </source>
</evidence>
<evidence type="ECO:0000256" key="2">
    <source>
        <dbReference type="SAM" id="MobiDB-lite"/>
    </source>
</evidence>
<evidence type="ECO:0000305" key="3"/>
<dbReference type="EMBL" id="CP000517">
    <property type="protein sequence ID" value="ABX27406.1"/>
    <property type="molecule type" value="Genomic_DNA"/>
</dbReference>
<dbReference type="RefSeq" id="WP_003629151.1">
    <property type="nucleotide sequence ID" value="NC_010080.1"/>
</dbReference>
<dbReference type="SMR" id="A8YVX6"/>
<dbReference type="KEGG" id="lhe:lhv_1423"/>
<dbReference type="eggNOG" id="COG0211">
    <property type="taxonomic scope" value="Bacteria"/>
</dbReference>
<dbReference type="HOGENOM" id="CLU_095424_4_0_9"/>
<dbReference type="Proteomes" id="UP000000790">
    <property type="component" value="Chromosome"/>
</dbReference>
<dbReference type="GO" id="GO:0022625">
    <property type="term" value="C:cytosolic large ribosomal subunit"/>
    <property type="evidence" value="ECO:0007669"/>
    <property type="project" value="TreeGrafter"/>
</dbReference>
<dbReference type="GO" id="GO:0003735">
    <property type="term" value="F:structural constituent of ribosome"/>
    <property type="evidence" value="ECO:0007669"/>
    <property type="project" value="InterPro"/>
</dbReference>
<dbReference type="GO" id="GO:0006412">
    <property type="term" value="P:translation"/>
    <property type="evidence" value="ECO:0007669"/>
    <property type="project" value="UniProtKB-UniRule"/>
</dbReference>
<dbReference type="FunFam" id="2.40.50.100:FF:000004">
    <property type="entry name" value="50S ribosomal protein L27"/>
    <property type="match status" value="1"/>
</dbReference>
<dbReference type="Gene3D" id="2.40.50.100">
    <property type="match status" value="1"/>
</dbReference>
<dbReference type="HAMAP" id="MF_00539">
    <property type="entry name" value="Ribosomal_bL27"/>
    <property type="match status" value="1"/>
</dbReference>
<dbReference type="InterPro" id="IPR001684">
    <property type="entry name" value="Ribosomal_bL27"/>
</dbReference>
<dbReference type="InterPro" id="IPR018261">
    <property type="entry name" value="Ribosomal_bL27_CS"/>
</dbReference>
<dbReference type="NCBIfam" id="TIGR00062">
    <property type="entry name" value="L27"/>
    <property type="match status" value="1"/>
</dbReference>
<dbReference type="PANTHER" id="PTHR15893:SF0">
    <property type="entry name" value="LARGE RIBOSOMAL SUBUNIT PROTEIN BL27M"/>
    <property type="match status" value="1"/>
</dbReference>
<dbReference type="PANTHER" id="PTHR15893">
    <property type="entry name" value="RIBOSOMAL PROTEIN L27"/>
    <property type="match status" value="1"/>
</dbReference>
<dbReference type="Pfam" id="PF01016">
    <property type="entry name" value="Ribosomal_L27"/>
    <property type="match status" value="1"/>
</dbReference>
<dbReference type="PRINTS" id="PR00063">
    <property type="entry name" value="RIBOSOMALL27"/>
</dbReference>
<dbReference type="SUPFAM" id="SSF110324">
    <property type="entry name" value="Ribosomal L27 protein-like"/>
    <property type="match status" value="1"/>
</dbReference>
<dbReference type="PROSITE" id="PS00831">
    <property type="entry name" value="RIBOSOMAL_L27"/>
    <property type="match status" value="1"/>
</dbReference>
<protein>
    <recommendedName>
        <fullName evidence="1">Large ribosomal subunit protein bL27</fullName>
    </recommendedName>
    <alternativeName>
        <fullName evidence="3">50S ribosomal protein L27</fullName>
    </alternativeName>
</protein>
<reference key="1">
    <citation type="journal article" date="2008" name="J. Bacteriol.">
        <title>Genome sequence of Lactobacillus helveticus: an organism distinguished by selective gene loss and IS element expansion.</title>
        <authorList>
            <person name="Callanan M."/>
            <person name="Kaleta P."/>
            <person name="O'Callaghan J."/>
            <person name="O'Sullivan O."/>
            <person name="Jordan K."/>
            <person name="McAuliffe O."/>
            <person name="Sangrador-Vegas A."/>
            <person name="Slattery L."/>
            <person name="Fitzgerald G.F."/>
            <person name="Beresford T."/>
            <person name="Ross R.P."/>
        </authorList>
    </citation>
    <scope>NUCLEOTIDE SEQUENCE [LARGE SCALE GENOMIC DNA]</scope>
    <source>
        <strain>DPC 4571</strain>
    </source>
</reference>
<comment type="similarity">
    <text evidence="1">Belongs to the bacterial ribosomal protein bL27 family.</text>
</comment>